<sequence length="130" mass="14262">MIGEWNNGTGRRKSSVARVFLKKGSGKITVNGKDIQQYFGRETSIMIAKQPLALTNHVETFDIQINVHGGGESGQAGAARHGITRALIDYDATLKPALSQAGFVTRDAREVERKKVGLHSARRAKQFSKR</sequence>
<comment type="similarity">
    <text evidence="1">Belongs to the universal ribosomal protein uS9 family.</text>
</comment>
<feature type="chain" id="PRO_1000146452" description="Small ribosomal subunit protein uS9">
    <location>
        <begin position="1"/>
        <end position="130"/>
    </location>
</feature>
<name>RS9_ACIET</name>
<keyword id="KW-1185">Reference proteome</keyword>
<keyword id="KW-0687">Ribonucleoprotein</keyword>
<keyword id="KW-0689">Ribosomal protein</keyword>
<dbReference type="EMBL" id="CP001392">
    <property type="protein sequence ID" value="ACM32085.1"/>
    <property type="molecule type" value="Genomic_DNA"/>
</dbReference>
<dbReference type="RefSeq" id="WP_011804080.1">
    <property type="nucleotide sequence ID" value="NC_011992.1"/>
</dbReference>
<dbReference type="SMR" id="B9MD53"/>
<dbReference type="GeneID" id="84682873"/>
<dbReference type="KEGG" id="dia:Dtpsy_0605"/>
<dbReference type="eggNOG" id="COG0103">
    <property type="taxonomic scope" value="Bacteria"/>
</dbReference>
<dbReference type="HOGENOM" id="CLU_046483_2_1_4"/>
<dbReference type="Proteomes" id="UP000000450">
    <property type="component" value="Chromosome"/>
</dbReference>
<dbReference type="GO" id="GO:0022627">
    <property type="term" value="C:cytosolic small ribosomal subunit"/>
    <property type="evidence" value="ECO:0007669"/>
    <property type="project" value="TreeGrafter"/>
</dbReference>
<dbReference type="GO" id="GO:0003723">
    <property type="term" value="F:RNA binding"/>
    <property type="evidence" value="ECO:0007669"/>
    <property type="project" value="TreeGrafter"/>
</dbReference>
<dbReference type="GO" id="GO:0003735">
    <property type="term" value="F:structural constituent of ribosome"/>
    <property type="evidence" value="ECO:0007669"/>
    <property type="project" value="InterPro"/>
</dbReference>
<dbReference type="GO" id="GO:0006412">
    <property type="term" value="P:translation"/>
    <property type="evidence" value="ECO:0007669"/>
    <property type="project" value="UniProtKB-UniRule"/>
</dbReference>
<dbReference type="FunFam" id="3.30.230.10:FF:000001">
    <property type="entry name" value="30S ribosomal protein S9"/>
    <property type="match status" value="1"/>
</dbReference>
<dbReference type="Gene3D" id="3.30.230.10">
    <property type="match status" value="1"/>
</dbReference>
<dbReference type="HAMAP" id="MF_00532_B">
    <property type="entry name" value="Ribosomal_uS9_B"/>
    <property type="match status" value="1"/>
</dbReference>
<dbReference type="InterPro" id="IPR020568">
    <property type="entry name" value="Ribosomal_Su5_D2-typ_SF"/>
</dbReference>
<dbReference type="InterPro" id="IPR000754">
    <property type="entry name" value="Ribosomal_uS9"/>
</dbReference>
<dbReference type="InterPro" id="IPR023035">
    <property type="entry name" value="Ribosomal_uS9_bac/plastid"/>
</dbReference>
<dbReference type="InterPro" id="IPR020574">
    <property type="entry name" value="Ribosomal_uS9_CS"/>
</dbReference>
<dbReference type="InterPro" id="IPR014721">
    <property type="entry name" value="Ribsml_uS5_D2-typ_fold_subgr"/>
</dbReference>
<dbReference type="NCBIfam" id="NF001099">
    <property type="entry name" value="PRK00132.1"/>
    <property type="match status" value="1"/>
</dbReference>
<dbReference type="PANTHER" id="PTHR21569">
    <property type="entry name" value="RIBOSOMAL PROTEIN S9"/>
    <property type="match status" value="1"/>
</dbReference>
<dbReference type="PANTHER" id="PTHR21569:SF1">
    <property type="entry name" value="SMALL RIBOSOMAL SUBUNIT PROTEIN US9M"/>
    <property type="match status" value="1"/>
</dbReference>
<dbReference type="Pfam" id="PF00380">
    <property type="entry name" value="Ribosomal_S9"/>
    <property type="match status" value="1"/>
</dbReference>
<dbReference type="SUPFAM" id="SSF54211">
    <property type="entry name" value="Ribosomal protein S5 domain 2-like"/>
    <property type="match status" value="1"/>
</dbReference>
<dbReference type="PROSITE" id="PS00360">
    <property type="entry name" value="RIBOSOMAL_S9"/>
    <property type="match status" value="1"/>
</dbReference>
<gene>
    <name evidence="1" type="primary">rpsI</name>
    <name type="ordered locus">Dtpsy_0605</name>
</gene>
<organism>
    <name type="scientific">Acidovorax ebreus (strain TPSY)</name>
    <name type="common">Diaphorobacter sp. (strain TPSY)</name>
    <dbReference type="NCBI Taxonomy" id="535289"/>
    <lineage>
        <taxon>Bacteria</taxon>
        <taxon>Pseudomonadati</taxon>
        <taxon>Pseudomonadota</taxon>
        <taxon>Betaproteobacteria</taxon>
        <taxon>Burkholderiales</taxon>
        <taxon>Comamonadaceae</taxon>
        <taxon>Diaphorobacter</taxon>
    </lineage>
</organism>
<evidence type="ECO:0000255" key="1">
    <source>
        <dbReference type="HAMAP-Rule" id="MF_00532"/>
    </source>
</evidence>
<evidence type="ECO:0000305" key="2"/>
<protein>
    <recommendedName>
        <fullName evidence="1">Small ribosomal subunit protein uS9</fullName>
    </recommendedName>
    <alternativeName>
        <fullName evidence="2">30S ribosomal protein S9</fullName>
    </alternativeName>
</protein>
<proteinExistence type="inferred from homology"/>
<reference key="1">
    <citation type="submission" date="2009-01" db="EMBL/GenBank/DDBJ databases">
        <title>Complete sequence of Diaphorobacter sp. TPSY.</title>
        <authorList>
            <consortium name="US DOE Joint Genome Institute"/>
            <person name="Lucas S."/>
            <person name="Copeland A."/>
            <person name="Lapidus A."/>
            <person name="Glavina del Rio T."/>
            <person name="Tice H."/>
            <person name="Bruce D."/>
            <person name="Goodwin L."/>
            <person name="Pitluck S."/>
            <person name="Chertkov O."/>
            <person name="Brettin T."/>
            <person name="Detter J.C."/>
            <person name="Han C."/>
            <person name="Larimer F."/>
            <person name="Land M."/>
            <person name="Hauser L."/>
            <person name="Kyrpides N."/>
            <person name="Mikhailova N."/>
            <person name="Coates J.D."/>
        </authorList>
    </citation>
    <scope>NUCLEOTIDE SEQUENCE [LARGE SCALE GENOMIC DNA]</scope>
    <source>
        <strain>TPSY</strain>
    </source>
</reference>
<accession>B9MD53</accession>